<organism>
    <name type="scientific">Daboia russelii</name>
    <name type="common">Russel's viper</name>
    <name type="synonym">Vipera russelii</name>
    <dbReference type="NCBI Taxonomy" id="8707"/>
    <lineage>
        <taxon>Eukaryota</taxon>
        <taxon>Metazoa</taxon>
        <taxon>Chordata</taxon>
        <taxon>Craniata</taxon>
        <taxon>Vertebrata</taxon>
        <taxon>Euteleostomi</taxon>
        <taxon>Lepidosauria</taxon>
        <taxon>Squamata</taxon>
        <taxon>Bifurcata</taxon>
        <taxon>Unidentata</taxon>
        <taxon>Episquamata</taxon>
        <taxon>Toxicofera</taxon>
        <taxon>Serpentes</taxon>
        <taxon>Colubroidea</taxon>
        <taxon>Viperidae</taxon>
        <taxon>Viperinae</taxon>
        <taxon>Daboia</taxon>
    </lineage>
</organism>
<accession>P86534</accession>
<reference evidence="5" key="1">
    <citation type="journal article" date="2010" name="Biomed. Res.">
        <title>Molecular diversity in venom proteins of the Russell's viper (Daboia russellii russellii) and the Indian cobra (Naja naja) in Sri Lanka.</title>
        <authorList>
            <person name="Suzuki M."/>
            <person name="Itoh T."/>
            <person name="Bandaranayake B.M.A.I.K."/>
            <person name="Ranasinghe J.G."/>
            <person name="Athauda S.B."/>
            <person name="Moriyama A."/>
        </authorList>
    </citation>
    <scope>PROTEIN SEQUENCE</scope>
    <scope>SUBCELLULAR LOCATION</scope>
    <scope>TISSUE SPECIFICITY</scope>
    <source>
        <tissue evidence="3">Venom</tissue>
    </source>
</reference>
<dbReference type="GO" id="GO:0005576">
    <property type="term" value="C:extracellular region"/>
    <property type="evidence" value="ECO:0007669"/>
    <property type="project" value="UniProtKB-SubCell"/>
</dbReference>
<dbReference type="GO" id="GO:0030246">
    <property type="term" value="F:carbohydrate binding"/>
    <property type="evidence" value="ECO:0007669"/>
    <property type="project" value="UniProtKB-KW"/>
</dbReference>
<feature type="chain" id="PRO_0000394723" description="C-type lectin domain-containing protein 2">
    <location>
        <begin position="1"/>
        <end position="19" status="greater than"/>
    </location>
</feature>
<feature type="domain" description="C-type lectin" evidence="2">
    <location>
        <begin position="1"/>
        <end position="19" status="greater than"/>
    </location>
</feature>
<feature type="disulfide bond" evidence="1 2">
    <location>
        <begin position="4"/>
        <end position="15"/>
    </location>
</feature>
<feature type="non-terminal residue" evidence="4">
    <location>
        <position position="19"/>
    </location>
</feature>
<comment type="subcellular location">
    <subcellularLocation>
        <location evidence="3">Secreted</location>
    </subcellularLocation>
</comment>
<comment type="tissue specificity">
    <text evidence="3">Expressed by the venom gland.</text>
</comment>
<comment type="similarity">
    <text evidence="5">Belongs to the true venom lectin family.</text>
</comment>
<protein>
    <recommendedName>
        <fullName>C-type lectin domain-containing protein 2</fullName>
        <shortName evidence="4">CLP2</shortName>
    </recommendedName>
</protein>
<name>LEC2_DABRR</name>
<sequence>NQDCRPGWSFYEQNCYKVF</sequence>
<proteinExistence type="evidence at protein level"/>
<keyword id="KW-0903">Direct protein sequencing</keyword>
<keyword id="KW-1015">Disulfide bond</keyword>
<keyword id="KW-0430">Lectin</keyword>
<keyword id="KW-0964">Secreted</keyword>
<evidence type="ECO:0000250" key="1">
    <source>
        <dbReference type="UniProtKB" id="Q9IAM1"/>
    </source>
</evidence>
<evidence type="ECO:0000255" key="2">
    <source>
        <dbReference type="PROSITE-ProRule" id="PRU00040"/>
    </source>
</evidence>
<evidence type="ECO:0000269" key="3">
    <source>
    </source>
</evidence>
<evidence type="ECO:0000303" key="4">
    <source>
    </source>
</evidence>
<evidence type="ECO:0000305" key="5"/>